<comment type="function">
    <text evidence="1">Heme chaperone required for the biogenesis of c-type cytochromes. Transiently binds heme delivered by CcmC and transfers the heme to apo-cytochromes in a process facilitated by CcmF and CcmH.</text>
</comment>
<comment type="subcellular location">
    <subcellularLocation>
        <location evidence="1">Cell inner membrane</location>
        <topology evidence="1">Single-pass type II membrane protein</topology>
        <orientation evidence="1">Periplasmic side</orientation>
    </subcellularLocation>
</comment>
<comment type="similarity">
    <text evidence="1">Belongs to the CcmE/CycJ family.</text>
</comment>
<keyword id="KW-0997">Cell inner membrane</keyword>
<keyword id="KW-1003">Cell membrane</keyword>
<keyword id="KW-0201">Cytochrome c-type biogenesis</keyword>
<keyword id="KW-0349">Heme</keyword>
<keyword id="KW-0408">Iron</keyword>
<keyword id="KW-0472">Membrane</keyword>
<keyword id="KW-0479">Metal-binding</keyword>
<keyword id="KW-0614">Plasmid</keyword>
<keyword id="KW-1185">Reference proteome</keyword>
<keyword id="KW-0735">Signal-anchor</keyword>
<keyword id="KW-0812">Transmembrane</keyword>
<keyword id="KW-1133">Transmembrane helix</keyword>
<organism>
    <name type="scientific">Ruegeria pomeroyi (strain ATCC 700808 / DSM 15171 / DSS-3)</name>
    <name type="common">Silicibacter pomeroyi</name>
    <dbReference type="NCBI Taxonomy" id="246200"/>
    <lineage>
        <taxon>Bacteria</taxon>
        <taxon>Pseudomonadati</taxon>
        <taxon>Pseudomonadota</taxon>
        <taxon>Alphaproteobacteria</taxon>
        <taxon>Rhodobacterales</taxon>
        <taxon>Roseobacteraceae</taxon>
        <taxon>Ruegeria</taxon>
    </lineage>
</organism>
<gene>
    <name evidence="1" type="primary">ccmE2</name>
    <name evidence="1" type="synonym">cycJ2</name>
    <name type="ordered locus">SPOA0193</name>
</gene>
<evidence type="ECO:0000255" key="1">
    <source>
        <dbReference type="HAMAP-Rule" id="MF_01959"/>
    </source>
</evidence>
<dbReference type="EMBL" id="CP000032">
    <property type="protein sequence ID" value="AAV97327.1"/>
    <property type="molecule type" value="Genomic_DNA"/>
</dbReference>
<dbReference type="RefSeq" id="WP_011241972.1">
    <property type="nucleotide sequence ID" value="NC_006569.1"/>
</dbReference>
<dbReference type="SMR" id="Q5LL36"/>
<dbReference type="PaxDb" id="246200-SPOA0193"/>
<dbReference type="KEGG" id="sil:SPOA0193"/>
<dbReference type="eggNOG" id="COG2332">
    <property type="taxonomic scope" value="Bacteria"/>
</dbReference>
<dbReference type="HOGENOM" id="CLU_079503_1_1_5"/>
<dbReference type="OrthoDB" id="9793584at2"/>
<dbReference type="Proteomes" id="UP000001023">
    <property type="component" value="Plasmid megaplasmid"/>
</dbReference>
<dbReference type="GO" id="GO:0005886">
    <property type="term" value="C:plasma membrane"/>
    <property type="evidence" value="ECO:0007669"/>
    <property type="project" value="UniProtKB-SubCell"/>
</dbReference>
<dbReference type="GO" id="GO:0020037">
    <property type="term" value="F:heme binding"/>
    <property type="evidence" value="ECO:0007669"/>
    <property type="project" value="InterPro"/>
</dbReference>
<dbReference type="GO" id="GO:0046872">
    <property type="term" value="F:metal ion binding"/>
    <property type="evidence" value="ECO:0007669"/>
    <property type="project" value="UniProtKB-KW"/>
</dbReference>
<dbReference type="GO" id="GO:0017004">
    <property type="term" value="P:cytochrome complex assembly"/>
    <property type="evidence" value="ECO:0007669"/>
    <property type="project" value="UniProtKB-KW"/>
</dbReference>
<dbReference type="FunFam" id="2.40.50.140:FF:000104">
    <property type="entry name" value="Cytochrome c-type biogenesis protein CcmE"/>
    <property type="match status" value="1"/>
</dbReference>
<dbReference type="Gene3D" id="2.40.50.140">
    <property type="entry name" value="Nucleic acid-binding proteins"/>
    <property type="match status" value="1"/>
</dbReference>
<dbReference type="HAMAP" id="MF_01959">
    <property type="entry name" value="CcmE"/>
    <property type="match status" value="1"/>
</dbReference>
<dbReference type="InterPro" id="IPR004329">
    <property type="entry name" value="CcmE"/>
</dbReference>
<dbReference type="InterPro" id="IPR036127">
    <property type="entry name" value="CcmE-like_sf"/>
</dbReference>
<dbReference type="InterPro" id="IPR012340">
    <property type="entry name" value="NA-bd_OB-fold"/>
</dbReference>
<dbReference type="NCBIfam" id="NF009727">
    <property type="entry name" value="PRK13254.1-1"/>
    <property type="match status" value="1"/>
</dbReference>
<dbReference type="NCBIfam" id="NF009731">
    <property type="entry name" value="PRK13254.1-5"/>
    <property type="match status" value="1"/>
</dbReference>
<dbReference type="PANTHER" id="PTHR34128">
    <property type="entry name" value="CYTOCHROME C-TYPE BIOGENESIS PROTEIN CCME HOMOLOG, MITOCHONDRIAL"/>
    <property type="match status" value="1"/>
</dbReference>
<dbReference type="PANTHER" id="PTHR34128:SF2">
    <property type="entry name" value="CYTOCHROME C-TYPE BIOGENESIS PROTEIN CCME HOMOLOG, MITOCHONDRIAL"/>
    <property type="match status" value="1"/>
</dbReference>
<dbReference type="Pfam" id="PF03100">
    <property type="entry name" value="CcmE"/>
    <property type="match status" value="1"/>
</dbReference>
<dbReference type="SUPFAM" id="SSF82093">
    <property type="entry name" value="Heme chaperone CcmE"/>
    <property type="match status" value="1"/>
</dbReference>
<name>CCME2_RUEPO</name>
<sequence length="139" mass="15009">MASLKKSRRVRLILFSGVALVSATALIGYAMRDGIQFFRTPTEVATDPPAANEVLRIGGMVEHGSLVRDGANFSFRVTDGETSFPISYVGIVPDLFREGEGTIATGSVIGGVFRATEILAKHDEVYMPSELAEMEALRD</sequence>
<reference key="1">
    <citation type="journal article" date="2004" name="Nature">
        <title>Genome sequence of Silicibacter pomeroyi reveals adaptations to the marine environment.</title>
        <authorList>
            <person name="Moran M.A."/>
            <person name="Buchan A."/>
            <person name="Gonzalez J.M."/>
            <person name="Heidelberg J.F."/>
            <person name="Whitman W.B."/>
            <person name="Kiene R.P."/>
            <person name="Henriksen J.R."/>
            <person name="King G.M."/>
            <person name="Belas R."/>
            <person name="Fuqua C."/>
            <person name="Brinkac L.M."/>
            <person name="Lewis M."/>
            <person name="Johri S."/>
            <person name="Weaver B."/>
            <person name="Pai G."/>
            <person name="Eisen J.A."/>
            <person name="Rahe E."/>
            <person name="Sheldon W.M."/>
            <person name="Ye W."/>
            <person name="Miller T.R."/>
            <person name="Carlton J."/>
            <person name="Rasko D.A."/>
            <person name="Paulsen I.T."/>
            <person name="Ren Q."/>
            <person name="Daugherty S.C."/>
            <person name="DeBoy R.T."/>
            <person name="Dodson R.J."/>
            <person name="Durkin A.S."/>
            <person name="Madupu R."/>
            <person name="Nelson W.C."/>
            <person name="Sullivan S.A."/>
            <person name="Rosovitz M.J."/>
            <person name="Haft D.H."/>
            <person name="Selengut J."/>
            <person name="Ward N."/>
        </authorList>
    </citation>
    <scope>NUCLEOTIDE SEQUENCE [LARGE SCALE GENOMIC DNA]</scope>
    <source>
        <strain>ATCC 700808 / DSM 15171 / DSS-3</strain>
    </source>
</reference>
<reference key="2">
    <citation type="journal article" date="2014" name="Stand. Genomic Sci.">
        <title>An updated genome annotation for the model marine bacterium Ruegeria pomeroyi DSS-3.</title>
        <authorList>
            <person name="Rivers A.R."/>
            <person name="Smith C.B."/>
            <person name="Moran M.A."/>
        </authorList>
    </citation>
    <scope>GENOME REANNOTATION</scope>
    <source>
        <strain>ATCC 700808 / DSM 15171 / DSS-3</strain>
    </source>
</reference>
<feature type="chain" id="PRO_0000238869" description="Cytochrome c-type biogenesis protein CcmE 2">
    <location>
        <begin position="1"/>
        <end position="139"/>
    </location>
</feature>
<feature type="topological domain" description="Cytoplasmic" evidence="1">
    <location>
        <begin position="1"/>
        <end position="9"/>
    </location>
</feature>
<feature type="transmembrane region" description="Helical; Signal-anchor for type II membrane protein" evidence="1">
    <location>
        <begin position="10"/>
        <end position="30"/>
    </location>
</feature>
<feature type="topological domain" description="Periplasmic" evidence="1">
    <location>
        <begin position="31"/>
        <end position="139"/>
    </location>
</feature>
<feature type="binding site" description="covalent" evidence="1">
    <location>
        <position position="122"/>
    </location>
    <ligand>
        <name>heme</name>
        <dbReference type="ChEBI" id="CHEBI:30413"/>
    </ligand>
</feature>
<feature type="binding site" description="axial binding residue" evidence="1">
    <location>
        <position position="126"/>
    </location>
    <ligand>
        <name>heme</name>
        <dbReference type="ChEBI" id="CHEBI:30413"/>
    </ligand>
    <ligandPart>
        <name>Fe</name>
        <dbReference type="ChEBI" id="CHEBI:18248"/>
    </ligandPart>
</feature>
<accession>Q5LL36</accession>
<geneLocation type="plasmid">
    <name>megaplasmid Spo</name>
</geneLocation>
<protein>
    <recommendedName>
        <fullName evidence="1">Cytochrome c-type biogenesis protein CcmE 2</fullName>
    </recommendedName>
    <alternativeName>
        <fullName evidence="1">Cytochrome c maturation protein E 2</fullName>
    </alternativeName>
    <alternativeName>
        <fullName evidence="1">Heme chaperone CcmE 2</fullName>
    </alternativeName>
</protein>
<proteinExistence type="inferred from homology"/>